<sequence length="90" mass="9618">MKTLPLVLAVVAFVYLDLAHTLKCRSGNVCILGDDCSEGENVCFQRKNGTGVFGMRVVRGCAASCPSPIGGEEVSCCSTDNCNNSFSRFF</sequence>
<accession>A7X3M3</accession>
<organism>
    <name type="scientific">Psammophis mossambicus</name>
    <name type="common">Olive sand snake</name>
    <dbReference type="NCBI Taxonomy" id="234064"/>
    <lineage>
        <taxon>Eukaryota</taxon>
        <taxon>Metazoa</taxon>
        <taxon>Chordata</taxon>
        <taxon>Craniata</taxon>
        <taxon>Vertebrata</taxon>
        <taxon>Euteleostomi</taxon>
        <taxon>Lepidosauria</taxon>
        <taxon>Squamata</taxon>
        <taxon>Bifurcata</taxon>
        <taxon>Unidentata</taxon>
        <taxon>Episquamata</taxon>
        <taxon>Toxicofera</taxon>
        <taxon>Serpentes</taxon>
        <taxon>Colubroidea</taxon>
        <taxon>Lamprophiidae</taxon>
        <taxon>Psammophiinae</taxon>
        <taxon>Psammophis</taxon>
    </lineage>
</organism>
<evidence type="ECO:0000250" key="1"/>
<evidence type="ECO:0000250" key="2">
    <source>
        <dbReference type="UniProtKB" id="Q9YGJ0"/>
    </source>
</evidence>
<evidence type="ECO:0000255" key="3"/>
<evidence type="ECO:0000305" key="4"/>
<evidence type="ECO:0000312" key="5">
    <source>
        <dbReference type="EMBL" id="ABU68469.1"/>
    </source>
</evidence>
<comment type="subcellular location">
    <subcellularLocation>
        <location evidence="1">Secreted</location>
    </subcellularLocation>
</comment>
<comment type="tissue specificity">
    <text evidence="4">Expressed by the venom gland.</text>
</comment>
<comment type="similarity">
    <text evidence="4">Belongs to the three-finger toxin family. Ancestral subfamily.</text>
</comment>
<name>3NX1_PSAMO</name>
<reference key="1">
    <citation type="journal article" date="2008" name="Mol. Cell. Proteomics">
        <title>Evolution of an arsenal: structural and functional diversification of the venom system in the advanced snakes (Caenophidia).</title>
        <authorList>
            <person name="Fry B.G."/>
            <person name="Scheib H."/>
            <person name="van der Weerd L."/>
            <person name="Young B."/>
            <person name="McNaughtan J."/>
            <person name="Ramjan S.F.R."/>
            <person name="Vidal N."/>
            <person name="Poelmann R.E."/>
            <person name="Norman J.A."/>
        </authorList>
    </citation>
    <scope>NUCLEOTIDE SEQUENCE [LARGE SCALE MRNA]</scope>
    <source>
        <tissue>Venom gland</tissue>
    </source>
</reference>
<keyword id="KW-1015">Disulfide bond</keyword>
<keyword id="KW-0964">Secreted</keyword>
<keyword id="KW-0732">Signal</keyword>
<keyword id="KW-0800">Toxin</keyword>
<dbReference type="EMBL" id="EU029669">
    <property type="protein sequence ID" value="ABU68469.1"/>
    <property type="molecule type" value="mRNA"/>
</dbReference>
<dbReference type="SMR" id="A7X3M3"/>
<dbReference type="GO" id="GO:0005576">
    <property type="term" value="C:extracellular region"/>
    <property type="evidence" value="ECO:0007669"/>
    <property type="project" value="UniProtKB-SubCell"/>
</dbReference>
<dbReference type="GO" id="GO:0090729">
    <property type="term" value="F:toxin activity"/>
    <property type="evidence" value="ECO:0007669"/>
    <property type="project" value="UniProtKB-KW"/>
</dbReference>
<dbReference type="CDD" id="cd00206">
    <property type="entry name" value="TFP_snake_toxin"/>
    <property type="match status" value="1"/>
</dbReference>
<dbReference type="Gene3D" id="2.10.60.10">
    <property type="entry name" value="CD59"/>
    <property type="match status" value="1"/>
</dbReference>
<dbReference type="InterPro" id="IPR003571">
    <property type="entry name" value="Snake_3FTx"/>
</dbReference>
<dbReference type="InterPro" id="IPR045860">
    <property type="entry name" value="Snake_toxin-like_sf"/>
</dbReference>
<dbReference type="InterPro" id="IPR018354">
    <property type="entry name" value="Snake_toxin_con_site"/>
</dbReference>
<dbReference type="InterPro" id="IPR054131">
    <property type="entry name" value="Toxin_cobra-type"/>
</dbReference>
<dbReference type="Pfam" id="PF21947">
    <property type="entry name" value="Toxin_cobra-type"/>
    <property type="match status" value="1"/>
</dbReference>
<dbReference type="SUPFAM" id="SSF57302">
    <property type="entry name" value="Snake toxin-like"/>
    <property type="match status" value="1"/>
</dbReference>
<dbReference type="PROSITE" id="PS00272">
    <property type="entry name" value="SNAKE_TOXIN"/>
    <property type="match status" value="1"/>
</dbReference>
<proteinExistence type="inferred from homology"/>
<feature type="signal peptide" evidence="3">
    <location>
        <begin position="1"/>
        <end position="21"/>
    </location>
</feature>
<feature type="chain" id="PRO_0000316180" description="Toxin 3FTx-Psa1">
    <location>
        <begin position="22"/>
        <end position="90"/>
    </location>
</feature>
<feature type="disulfide bond" evidence="2">
    <location>
        <begin position="24"/>
        <end position="43"/>
    </location>
</feature>
<feature type="disulfide bond" evidence="2">
    <location>
        <begin position="36"/>
        <end position="61"/>
    </location>
</feature>
<feature type="disulfide bond" evidence="2">
    <location>
        <begin position="65"/>
        <end position="76"/>
    </location>
</feature>
<feature type="disulfide bond" evidence="2">
    <location>
        <begin position="77"/>
        <end position="82"/>
    </location>
</feature>
<protein>
    <recommendedName>
        <fullName evidence="5">Toxin 3FTx-Psa1</fullName>
    </recommendedName>
</protein>